<dbReference type="EC" id="2.4.2.10" evidence="4"/>
<dbReference type="EMBL" id="X52194">
    <property type="protein sequence ID" value="CAA36440.1"/>
    <property type="molecule type" value="Genomic_DNA"/>
</dbReference>
<dbReference type="EMBL" id="X66375">
    <property type="protein sequence ID" value="CAA47016.1"/>
    <property type="molecule type" value="Genomic_DNA"/>
</dbReference>
<dbReference type="EMBL" id="Z49260">
    <property type="protein sequence ID" value="CAA89254.1"/>
    <property type="molecule type" value="Genomic_DNA"/>
</dbReference>
<dbReference type="EMBL" id="AY557976">
    <property type="protein sequence ID" value="AAS56302.1"/>
    <property type="molecule type" value="Genomic_DNA"/>
</dbReference>
<dbReference type="EMBL" id="BK006946">
    <property type="protein sequence ID" value="DAA10171.1"/>
    <property type="molecule type" value="Genomic_DNA"/>
</dbReference>
<dbReference type="PIR" id="S48223">
    <property type="entry name" value="XJBY10"/>
</dbReference>
<dbReference type="RefSeq" id="NP_013998.1">
    <property type="nucleotide sequence ID" value="NM_001182778.1"/>
</dbReference>
<dbReference type="SMR" id="P30402"/>
<dbReference type="BioGRID" id="35449">
    <property type="interactions" value="43"/>
</dbReference>
<dbReference type="DIP" id="DIP-2790N"/>
<dbReference type="FunCoup" id="P30402">
    <property type="interactions" value="207"/>
</dbReference>
<dbReference type="IntAct" id="P30402">
    <property type="interactions" value="3"/>
</dbReference>
<dbReference type="MINT" id="P30402"/>
<dbReference type="STRING" id="4932.YMR271C"/>
<dbReference type="PaxDb" id="4932-YMR271C"/>
<dbReference type="PeptideAtlas" id="P30402"/>
<dbReference type="EnsemblFungi" id="YMR271C_mRNA">
    <property type="protein sequence ID" value="YMR271C"/>
    <property type="gene ID" value="YMR271C"/>
</dbReference>
<dbReference type="GeneID" id="855313"/>
<dbReference type="KEGG" id="sce:YMR271C"/>
<dbReference type="AGR" id="SGD:S000004884"/>
<dbReference type="SGD" id="S000004884">
    <property type="gene designation" value="URA10"/>
</dbReference>
<dbReference type="VEuPathDB" id="FungiDB:YMR271C"/>
<dbReference type="eggNOG" id="KOG1377">
    <property type="taxonomic scope" value="Eukaryota"/>
</dbReference>
<dbReference type="GeneTree" id="ENSGT00390000001856"/>
<dbReference type="HOGENOM" id="CLU_074878_0_1_1"/>
<dbReference type="InParanoid" id="P30402"/>
<dbReference type="OMA" id="ANVFYLY"/>
<dbReference type="OrthoDB" id="5553476at2759"/>
<dbReference type="BioCyc" id="MetaCyc:YMR271C-MONOMER"/>
<dbReference type="BioCyc" id="YEAST:YMR271C-MONOMER"/>
<dbReference type="UniPathway" id="UPA00070">
    <property type="reaction ID" value="UER00119"/>
</dbReference>
<dbReference type="BioGRID-ORCS" id="855313">
    <property type="hits" value="0 hits in 10 CRISPR screens"/>
</dbReference>
<dbReference type="PRO" id="PR:P30402"/>
<dbReference type="Proteomes" id="UP000002311">
    <property type="component" value="Chromosome XIII"/>
</dbReference>
<dbReference type="RNAct" id="P30402">
    <property type="molecule type" value="protein"/>
</dbReference>
<dbReference type="GO" id="GO:0005737">
    <property type="term" value="C:cytoplasm"/>
    <property type="evidence" value="ECO:0007005"/>
    <property type="project" value="SGD"/>
</dbReference>
<dbReference type="GO" id="GO:0004588">
    <property type="term" value="F:orotate phosphoribosyltransferase activity"/>
    <property type="evidence" value="ECO:0000315"/>
    <property type="project" value="SGD"/>
</dbReference>
<dbReference type="GO" id="GO:0006207">
    <property type="term" value="P:'de novo' pyrimidine nucleobase biosynthetic process"/>
    <property type="evidence" value="ECO:0000316"/>
    <property type="project" value="SGD"/>
</dbReference>
<dbReference type="GO" id="GO:0044205">
    <property type="term" value="P:'de novo' UMP biosynthetic process"/>
    <property type="evidence" value="ECO:0007669"/>
    <property type="project" value="UniProtKB-UniPathway"/>
</dbReference>
<dbReference type="GO" id="GO:0006221">
    <property type="term" value="P:pyrimidine nucleotide biosynthetic process"/>
    <property type="evidence" value="ECO:0000318"/>
    <property type="project" value="GO_Central"/>
</dbReference>
<dbReference type="GO" id="GO:0046132">
    <property type="term" value="P:pyrimidine ribonucleoside biosynthetic process"/>
    <property type="evidence" value="ECO:0000315"/>
    <property type="project" value="SGD"/>
</dbReference>
<dbReference type="CDD" id="cd06223">
    <property type="entry name" value="PRTases_typeI"/>
    <property type="match status" value="1"/>
</dbReference>
<dbReference type="FunFam" id="3.40.50.2020:FF:000008">
    <property type="entry name" value="Orotate phosphoribosyltransferase"/>
    <property type="match status" value="1"/>
</dbReference>
<dbReference type="Gene3D" id="3.40.50.2020">
    <property type="match status" value="1"/>
</dbReference>
<dbReference type="HAMAP" id="MF_01208">
    <property type="entry name" value="PyrE"/>
    <property type="match status" value="1"/>
</dbReference>
<dbReference type="InterPro" id="IPR023031">
    <property type="entry name" value="OPRT"/>
</dbReference>
<dbReference type="InterPro" id="IPR004467">
    <property type="entry name" value="Or_phspho_trans_dom"/>
</dbReference>
<dbReference type="InterPro" id="IPR000836">
    <property type="entry name" value="PRibTrfase_dom"/>
</dbReference>
<dbReference type="InterPro" id="IPR029057">
    <property type="entry name" value="PRTase-like"/>
</dbReference>
<dbReference type="NCBIfam" id="TIGR00336">
    <property type="entry name" value="pyrE"/>
    <property type="match status" value="1"/>
</dbReference>
<dbReference type="PANTHER" id="PTHR46683">
    <property type="entry name" value="OROTATE PHOSPHORIBOSYLTRANSFERASE 1-RELATED"/>
    <property type="match status" value="1"/>
</dbReference>
<dbReference type="PANTHER" id="PTHR46683:SF1">
    <property type="entry name" value="OROTATE PHOSPHORIBOSYLTRANSFERASE 1-RELATED"/>
    <property type="match status" value="1"/>
</dbReference>
<dbReference type="Pfam" id="PF00156">
    <property type="entry name" value="Pribosyltran"/>
    <property type="match status" value="1"/>
</dbReference>
<dbReference type="SUPFAM" id="SSF53271">
    <property type="entry name" value="PRTase-like"/>
    <property type="match status" value="1"/>
</dbReference>
<dbReference type="PROSITE" id="PS00103">
    <property type="entry name" value="PUR_PYR_PR_TRANSFER"/>
    <property type="match status" value="1"/>
</dbReference>
<comment type="function">
    <text evidence="4">Catalyzes the transfer of a ribosyl phosphate group from 5-phosphoribose 1-diphosphate to orotate, leading to the formation of orotidine monophosphate (OMP).</text>
</comment>
<comment type="catalytic activity">
    <reaction evidence="4">
        <text>orotidine 5'-phosphate + diphosphate = orotate + 5-phospho-alpha-D-ribose 1-diphosphate</text>
        <dbReference type="Rhea" id="RHEA:10380"/>
        <dbReference type="ChEBI" id="CHEBI:30839"/>
        <dbReference type="ChEBI" id="CHEBI:33019"/>
        <dbReference type="ChEBI" id="CHEBI:57538"/>
        <dbReference type="ChEBI" id="CHEBI:58017"/>
        <dbReference type="EC" id="2.4.2.10"/>
    </reaction>
    <physiologicalReaction direction="right-to-left" evidence="4">
        <dbReference type="Rhea" id="RHEA:10382"/>
    </physiologicalReaction>
</comment>
<comment type="pathway">
    <text evidence="4">Pyrimidine metabolism; UMP biosynthesis via de novo pathway; UMP from orotate: step 1/2.</text>
</comment>
<comment type="subunit">
    <text evidence="1">Homodimer.</text>
</comment>
<comment type="miscellaneous">
    <text evidence="3">There are two genes coding for OPRT in yeast.</text>
</comment>
<comment type="miscellaneous">
    <text evidence="2">Present with 815 molecules/cell in log phase SD medium.</text>
</comment>
<comment type="similarity">
    <text evidence="3">Belongs to the purine/pyrimidine phosphoribosyltransferase family. PyrE subfamily.</text>
</comment>
<keyword id="KW-0328">Glycosyltransferase</keyword>
<keyword id="KW-0665">Pyrimidine biosynthesis</keyword>
<keyword id="KW-1185">Reference proteome</keyword>
<keyword id="KW-0808">Transferase</keyword>
<gene>
    <name type="primary">URA10</name>
    <name type="ordered locus">YMR271C</name>
    <name type="ORF">YM8156.13C</name>
</gene>
<proteinExistence type="evidence at protein level"/>
<evidence type="ECO:0000250" key="1"/>
<evidence type="ECO:0000269" key="2">
    <source>
    </source>
</evidence>
<evidence type="ECO:0000305" key="3"/>
<evidence type="ECO:0000305" key="4">
    <source>
    </source>
</evidence>
<feature type="chain" id="PRO_0000110805" description="Orotate phosphoribosyltransferase 2">
    <location>
        <begin position="1"/>
        <end position="227"/>
    </location>
</feature>
<feature type="binding site" evidence="1">
    <location>
        <begin position="41"/>
        <end position="42"/>
    </location>
    <ligand>
        <name>orotate</name>
        <dbReference type="ChEBI" id="CHEBI:30839"/>
    </ligand>
</feature>
<feature type="binding site" description="in other chain" evidence="1">
    <location>
        <begin position="79"/>
        <end position="80"/>
    </location>
    <ligand>
        <name>5-phospho-alpha-D-ribose 1-diphosphate</name>
        <dbReference type="ChEBI" id="CHEBI:58017"/>
        <note>ligand shared between dimeric partners</note>
    </ligand>
</feature>
<feature type="binding site" evidence="1">
    <location>
        <position position="109"/>
    </location>
    <ligand>
        <name>5-phospho-alpha-D-ribose 1-diphosphate</name>
        <dbReference type="ChEBI" id="CHEBI:58017"/>
        <note>ligand shared between dimeric partners</note>
    </ligand>
</feature>
<feature type="binding site" description="in other chain" evidence="1">
    <location>
        <position position="110"/>
    </location>
    <ligand>
        <name>5-phospho-alpha-D-ribose 1-diphosphate</name>
        <dbReference type="ChEBI" id="CHEBI:58017"/>
        <note>ligand shared between dimeric partners</note>
    </ligand>
</feature>
<feature type="binding site" evidence="1">
    <location>
        <position position="113"/>
    </location>
    <ligand>
        <name>5-phospho-alpha-D-ribose 1-diphosphate</name>
        <dbReference type="ChEBI" id="CHEBI:58017"/>
        <note>ligand shared between dimeric partners</note>
    </ligand>
</feature>
<feature type="binding site" evidence="1">
    <location>
        <position position="115"/>
    </location>
    <ligand>
        <name>5-phospho-alpha-D-ribose 1-diphosphate</name>
        <dbReference type="ChEBI" id="CHEBI:58017"/>
        <note>ligand shared between dimeric partners</note>
    </ligand>
</feature>
<feature type="binding site" description="in other chain" evidence="1">
    <location>
        <begin position="135"/>
        <end position="143"/>
    </location>
    <ligand>
        <name>5-phospho-alpha-D-ribose 1-diphosphate</name>
        <dbReference type="ChEBI" id="CHEBI:58017"/>
        <note>ligand shared between dimeric partners</note>
    </ligand>
</feature>
<feature type="binding site" evidence="1">
    <location>
        <position position="139"/>
    </location>
    <ligand>
        <name>orotate</name>
        <dbReference type="ChEBI" id="CHEBI:30839"/>
    </ligand>
</feature>
<feature type="binding site" evidence="1">
    <location>
        <position position="167"/>
    </location>
    <ligand>
        <name>orotate</name>
        <dbReference type="ChEBI" id="CHEBI:30839"/>
    </ligand>
</feature>
<feature type="sequence conflict" description="In Ref. 1; CAA36440." evidence="3" ref="1">
    <original>A</original>
    <variation>R</variation>
    <location>
        <position position="143"/>
    </location>
</feature>
<feature type="sequence conflict" description="In Ref. 1; CAA36440." evidence="3" ref="1">
    <original>V</original>
    <variation>L</variation>
    <location>
        <position position="158"/>
    </location>
</feature>
<name>PYRX_YEAST</name>
<sequence length="227" mass="24811">MSASTTSLEEYQKTFLELGLECKALRFGSFKLNSGRQSPYFFNLSLFNSGKLLANLATAYATAIIQSELKFDVIFGPAYKGIPLAAIVCVKLAEIGGTKFQGIQYAFNRKKVKDHGEGGIIVGASLEDKRVLIIDDVMTAGTAINEAFEIISIAQGRVVGCIVALDRQEVIHESDPERTSATQSVSKRYNVPVLSIVSLTQVVQFMGNRLSPEQKSAIENYRKAYGI</sequence>
<organism>
    <name type="scientific">Saccharomyces cerevisiae (strain ATCC 204508 / S288c)</name>
    <name type="common">Baker's yeast</name>
    <dbReference type="NCBI Taxonomy" id="559292"/>
    <lineage>
        <taxon>Eukaryota</taxon>
        <taxon>Fungi</taxon>
        <taxon>Dikarya</taxon>
        <taxon>Ascomycota</taxon>
        <taxon>Saccharomycotina</taxon>
        <taxon>Saccharomycetes</taxon>
        <taxon>Saccharomycetales</taxon>
        <taxon>Saccharomycetaceae</taxon>
        <taxon>Saccharomyces</taxon>
    </lineage>
</organism>
<accession>P30402</accession>
<accession>D6W097</accession>
<reference key="1">
    <citation type="journal article" date="1990" name="Curr. Genet.">
        <title>Cloning and sequencing of URA10, a second gene encoding orotate phosphoribosyl transferase in Saccharomyces cerevisiae.</title>
        <authorList>
            <person name="de Montigny J."/>
            <person name="Kern L."/>
            <person name="Hubert J.-C."/>
            <person name="Lacroute F."/>
        </authorList>
    </citation>
    <scope>NUCLEOTIDE SEQUENCE [GENOMIC DNA]</scope>
    <scope>FUNCTION</scope>
    <scope>CATALYTIC ACTIVITY</scope>
</reference>
<reference key="2">
    <citation type="journal article" date="1994" name="Curr. Genet.">
        <title>The byp1-3 allele of the Saccharomyces cerevisiae GGS1/TPS1 gene and its multi-copy suppressor tRNA(GLN) (CAG): Ggs1/Tps1 protein levels restraining growth on fermentable sugars and trehalose accumulation.</title>
        <authorList>
            <person name="Hohmann S."/>
            <person name="Van Dijck P."/>
            <person name="Luyten K."/>
            <person name="Thevelein J.M."/>
        </authorList>
    </citation>
    <scope>NUCLEOTIDE SEQUENCE [GENOMIC DNA]</scope>
</reference>
<reference key="3">
    <citation type="journal article" date="1997" name="Nature">
        <title>The nucleotide sequence of Saccharomyces cerevisiae chromosome XIII.</title>
        <authorList>
            <person name="Bowman S."/>
            <person name="Churcher C.M."/>
            <person name="Badcock K."/>
            <person name="Brown D."/>
            <person name="Chillingworth T."/>
            <person name="Connor R."/>
            <person name="Dedman K."/>
            <person name="Devlin K."/>
            <person name="Gentles S."/>
            <person name="Hamlin N."/>
            <person name="Hunt S."/>
            <person name="Jagels K."/>
            <person name="Lye G."/>
            <person name="Moule S."/>
            <person name="Odell C."/>
            <person name="Pearson D."/>
            <person name="Rajandream M.A."/>
            <person name="Rice P."/>
            <person name="Skelton J."/>
            <person name="Walsh S.V."/>
            <person name="Whitehead S."/>
            <person name="Barrell B.G."/>
        </authorList>
    </citation>
    <scope>NUCLEOTIDE SEQUENCE [LARGE SCALE GENOMIC DNA]</scope>
    <source>
        <strain>ATCC 204508 / S288c</strain>
    </source>
</reference>
<reference key="4">
    <citation type="journal article" date="2014" name="G3 (Bethesda)">
        <title>The reference genome sequence of Saccharomyces cerevisiae: Then and now.</title>
        <authorList>
            <person name="Engel S.R."/>
            <person name="Dietrich F.S."/>
            <person name="Fisk D.G."/>
            <person name="Binkley G."/>
            <person name="Balakrishnan R."/>
            <person name="Costanzo M.C."/>
            <person name="Dwight S.S."/>
            <person name="Hitz B.C."/>
            <person name="Karra K."/>
            <person name="Nash R.S."/>
            <person name="Weng S."/>
            <person name="Wong E.D."/>
            <person name="Lloyd P."/>
            <person name="Skrzypek M.S."/>
            <person name="Miyasato S.R."/>
            <person name="Simison M."/>
            <person name="Cherry J.M."/>
        </authorList>
    </citation>
    <scope>GENOME REANNOTATION</scope>
    <source>
        <strain>ATCC 204508 / S288c</strain>
    </source>
</reference>
<reference key="5">
    <citation type="journal article" date="2007" name="Genome Res.">
        <title>Approaching a complete repository of sequence-verified protein-encoding clones for Saccharomyces cerevisiae.</title>
        <authorList>
            <person name="Hu Y."/>
            <person name="Rolfs A."/>
            <person name="Bhullar B."/>
            <person name="Murthy T.V.S."/>
            <person name="Zhu C."/>
            <person name="Berger M.F."/>
            <person name="Camargo A.A."/>
            <person name="Kelley F."/>
            <person name="McCarron S."/>
            <person name="Jepson D."/>
            <person name="Richardson A."/>
            <person name="Raphael J."/>
            <person name="Moreira D."/>
            <person name="Taycher E."/>
            <person name="Zuo D."/>
            <person name="Mohr S."/>
            <person name="Kane M.F."/>
            <person name="Williamson J."/>
            <person name="Simpson A.J.G."/>
            <person name="Bulyk M.L."/>
            <person name="Harlow E."/>
            <person name="Marsischky G."/>
            <person name="Kolodner R.D."/>
            <person name="LaBaer J."/>
        </authorList>
    </citation>
    <scope>NUCLEOTIDE SEQUENCE [GENOMIC DNA]</scope>
    <source>
        <strain>ATCC 204508 / S288c</strain>
    </source>
</reference>
<reference key="6">
    <citation type="journal article" date="2003" name="Nature">
        <title>Global analysis of protein expression in yeast.</title>
        <authorList>
            <person name="Ghaemmaghami S."/>
            <person name="Huh W.-K."/>
            <person name="Bower K."/>
            <person name="Howson R.W."/>
            <person name="Belle A."/>
            <person name="Dephoure N."/>
            <person name="O'Shea E.K."/>
            <person name="Weissman J.S."/>
        </authorList>
    </citation>
    <scope>LEVEL OF PROTEIN EXPRESSION [LARGE SCALE ANALYSIS]</scope>
</reference>
<protein>
    <recommendedName>
        <fullName>Orotate phosphoribosyltransferase 2</fullName>
        <shortName>OPRT 2</shortName>
        <shortName>OPRTase 2</shortName>
        <ecNumber evidence="4">2.4.2.10</ecNumber>
    </recommendedName>
</protein>